<comment type="function">
    <text evidence="1">Regulates the transcription of several operons and genes involved in the biogenesis of Fe-S clusters and Fe-S-containing proteins.</text>
</comment>
<comment type="cofactor">
    <cofactor evidence="1">
        <name>[2Fe-2S] cluster</name>
        <dbReference type="ChEBI" id="CHEBI:190135"/>
    </cofactor>
    <text evidence="1">Binds 1 [2Fe-2S] cluster.</text>
</comment>
<name>ISCR_SERP5</name>
<accession>A8GHY4</accession>
<reference key="1">
    <citation type="submission" date="2007-09" db="EMBL/GenBank/DDBJ databases">
        <title>Complete sequence of chromosome of Serratia proteamaculans 568.</title>
        <authorList>
            <consortium name="US DOE Joint Genome Institute"/>
            <person name="Copeland A."/>
            <person name="Lucas S."/>
            <person name="Lapidus A."/>
            <person name="Barry K."/>
            <person name="Glavina del Rio T."/>
            <person name="Dalin E."/>
            <person name="Tice H."/>
            <person name="Pitluck S."/>
            <person name="Chain P."/>
            <person name="Malfatti S."/>
            <person name="Shin M."/>
            <person name="Vergez L."/>
            <person name="Schmutz J."/>
            <person name="Larimer F."/>
            <person name="Land M."/>
            <person name="Hauser L."/>
            <person name="Kyrpides N."/>
            <person name="Kim E."/>
            <person name="Taghavi S."/>
            <person name="Newman L."/>
            <person name="Vangronsveld J."/>
            <person name="van der Lelie D."/>
            <person name="Richardson P."/>
        </authorList>
    </citation>
    <scope>NUCLEOTIDE SEQUENCE [LARGE SCALE GENOMIC DNA]</scope>
    <source>
        <strain>568</strain>
    </source>
</reference>
<dbReference type="EMBL" id="CP000826">
    <property type="protein sequence ID" value="ABV42724.1"/>
    <property type="molecule type" value="Genomic_DNA"/>
</dbReference>
<dbReference type="SMR" id="A8GHY4"/>
<dbReference type="STRING" id="399741.Spro_3628"/>
<dbReference type="KEGG" id="spe:Spro_3628"/>
<dbReference type="eggNOG" id="COG1959">
    <property type="taxonomic scope" value="Bacteria"/>
</dbReference>
<dbReference type="HOGENOM" id="CLU_107144_0_0_6"/>
<dbReference type="OrthoDB" id="9808360at2"/>
<dbReference type="GO" id="GO:0005829">
    <property type="term" value="C:cytosol"/>
    <property type="evidence" value="ECO:0007669"/>
    <property type="project" value="TreeGrafter"/>
</dbReference>
<dbReference type="GO" id="GO:0051537">
    <property type="term" value="F:2 iron, 2 sulfur cluster binding"/>
    <property type="evidence" value="ECO:0007669"/>
    <property type="project" value="UniProtKB-KW"/>
</dbReference>
<dbReference type="GO" id="GO:0003700">
    <property type="term" value="F:DNA-binding transcription factor activity"/>
    <property type="evidence" value="ECO:0007669"/>
    <property type="project" value="UniProtKB-UniRule"/>
</dbReference>
<dbReference type="GO" id="GO:0003690">
    <property type="term" value="F:double-stranded DNA binding"/>
    <property type="evidence" value="ECO:0007669"/>
    <property type="project" value="UniProtKB-UniRule"/>
</dbReference>
<dbReference type="GO" id="GO:0005506">
    <property type="term" value="F:iron ion binding"/>
    <property type="evidence" value="ECO:0007669"/>
    <property type="project" value="UniProtKB-UniRule"/>
</dbReference>
<dbReference type="FunFam" id="1.10.10.10:FF:000026">
    <property type="entry name" value="HTH-type transcriptional regulator IscR"/>
    <property type="match status" value="1"/>
</dbReference>
<dbReference type="Gene3D" id="1.10.10.10">
    <property type="entry name" value="Winged helix-like DNA-binding domain superfamily/Winged helix DNA-binding domain"/>
    <property type="match status" value="1"/>
</dbReference>
<dbReference type="HAMAP" id="MF_01176">
    <property type="entry name" value="HTH_type_IscR"/>
    <property type="match status" value="1"/>
</dbReference>
<dbReference type="InterPro" id="IPR010242">
    <property type="entry name" value="TF_HTH_IscR"/>
</dbReference>
<dbReference type="InterPro" id="IPR030489">
    <property type="entry name" value="TR_Rrf2-type_CS"/>
</dbReference>
<dbReference type="InterPro" id="IPR000944">
    <property type="entry name" value="Tscrpt_reg_Rrf2"/>
</dbReference>
<dbReference type="InterPro" id="IPR036388">
    <property type="entry name" value="WH-like_DNA-bd_sf"/>
</dbReference>
<dbReference type="InterPro" id="IPR036390">
    <property type="entry name" value="WH_DNA-bd_sf"/>
</dbReference>
<dbReference type="NCBIfam" id="TIGR02010">
    <property type="entry name" value="IscR"/>
    <property type="match status" value="1"/>
</dbReference>
<dbReference type="NCBIfam" id="NF008110">
    <property type="entry name" value="PRK10857.1"/>
    <property type="match status" value="1"/>
</dbReference>
<dbReference type="NCBIfam" id="TIGR00738">
    <property type="entry name" value="rrf2_super"/>
    <property type="match status" value="1"/>
</dbReference>
<dbReference type="PANTHER" id="PTHR33221:SF5">
    <property type="entry name" value="HTH-TYPE TRANSCRIPTIONAL REGULATOR ISCR"/>
    <property type="match status" value="1"/>
</dbReference>
<dbReference type="PANTHER" id="PTHR33221">
    <property type="entry name" value="WINGED HELIX-TURN-HELIX TRANSCRIPTIONAL REGULATOR, RRF2 FAMILY"/>
    <property type="match status" value="1"/>
</dbReference>
<dbReference type="Pfam" id="PF02082">
    <property type="entry name" value="Rrf2"/>
    <property type="match status" value="1"/>
</dbReference>
<dbReference type="SUPFAM" id="SSF46785">
    <property type="entry name" value="Winged helix' DNA-binding domain"/>
    <property type="match status" value="1"/>
</dbReference>
<dbReference type="PROSITE" id="PS01332">
    <property type="entry name" value="HTH_RRF2_1"/>
    <property type="match status" value="1"/>
</dbReference>
<dbReference type="PROSITE" id="PS51197">
    <property type="entry name" value="HTH_RRF2_2"/>
    <property type="match status" value="1"/>
</dbReference>
<sequence>MRLTSKGRYAVTAMLDVALHSQEGPVPLADISERQGISLSYLEQLFSRLRKNGLVASVRGPGGGYLLGKDASEIAVGAVITAVDESVDATRCQGKEGCQGGDRCLTHTLWRDLSERISGFLNNITLAELVNNQDVLVVADRQNNDTRRTANGRPQETINVNLRA</sequence>
<organism>
    <name type="scientific">Serratia proteamaculans (strain 568)</name>
    <dbReference type="NCBI Taxonomy" id="399741"/>
    <lineage>
        <taxon>Bacteria</taxon>
        <taxon>Pseudomonadati</taxon>
        <taxon>Pseudomonadota</taxon>
        <taxon>Gammaproteobacteria</taxon>
        <taxon>Enterobacterales</taxon>
        <taxon>Yersiniaceae</taxon>
        <taxon>Serratia</taxon>
    </lineage>
</organism>
<protein>
    <recommendedName>
        <fullName evidence="1">HTH-type transcriptional regulator IscR</fullName>
    </recommendedName>
</protein>
<gene>
    <name evidence="1" type="primary">iscR</name>
    <name type="ordered locus">Spro_3628</name>
</gene>
<keyword id="KW-0001">2Fe-2S</keyword>
<keyword id="KW-0010">Activator</keyword>
<keyword id="KW-0238">DNA-binding</keyword>
<keyword id="KW-0408">Iron</keyword>
<keyword id="KW-0411">Iron-sulfur</keyword>
<keyword id="KW-0479">Metal-binding</keyword>
<keyword id="KW-0678">Repressor</keyword>
<keyword id="KW-0804">Transcription</keyword>
<keyword id="KW-0805">Transcription regulation</keyword>
<feature type="chain" id="PRO_1000085424" description="HTH-type transcriptional regulator IscR">
    <location>
        <begin position="1"/>
        <end position="164"/>
    </location>
</feature>
<feature type="domain" description="HTH rrf2-type" evidence="1">
    <location>
        <begin position="2"/>
        <end position="131"/>
    </location>
</feature>
<feature type="DNA-binding region" description="H-T-H motif" evidence="1">
    <location>
        <begin position="28"/>
        <end position="51"/>
    </location>
</feature>
<feature type="region of interest" description="Disordered" evidence="2">
    <location>
        <begin position="145"/>
        <end position="164"/>
    </location>
</feature>
<feature type="compositionally biased region" description="Polar residues" evidence="2">
    <location>
        <begin position="152"/>
        <end position="164"/>
    </location>
</feature>
<feature type="binding site" evidence="1">
    <location>
        <position position="92"/>
    </location>
    <ligand>
        <name>[2Fe-2S] cluster</name>
        <dbReference type="ChEBI" id="CHEBI:190135"/>
    </ligand>
</feature>
<feature type="binding site" evidence="1">
    <location>
        <position position="92"/>
    </location>
    <ligand>
        <name>a metal cation</name>
        <dbReference type="ChEBI" id="CHEBI:25213"/>
    </ligand>
</feature>
<feature type="binding site" evidence="1">
    <location>
        <position position="98"/>
    </location>
    <ligand>
        <name>[2Fe-2S] cluster</name>
        <dbReference type="ChEBI" id="CHEBI:190135"/>
    </ligand>
</feature>
<feature type="binding site" evidence="1">
    <location>
        <position position="98"/>
    </location>
    <ligand>
        <name>a metal cation</name>
        <dbReference type="ChEBI" id="CHEBI:25213"/>
    </ligand>
</feature>
<feature type="binding site" evidence="1">
    <location>
        <position position="104"/>
    </location>
    <ligand>
        <name>[2Fe-2S] cluster</name>
        <dbReference type="ChEBI" id="CHEBI:190135"/>
    </ligand>
</feature>
<feature type="binding site" evidence="1">
    <location>
        <position position="104"/>
    </location>
    <ligand>
        <name>a metal cation</name>
        <dbReference type="ChEBI" id="CHEBI:25213"/>
    </ligand>
</feature>
<evidence type="ECO:0000255" key="1">
    <source>
        <dbReference type="HAMAP-Rule" id="MF_01176"/>
    </source>
</evidence>
<evidence type="ECO:0000256" key="2">
    <source>
        <dbReference type="SAM" id="MobiDB-lite"/>
    </source>
</evidence>
<proteinExistence type="inferred from homology"/>